<protein>
    <recommendedName>
        <fullName>Regulator of G-protein signaling 3</fullName>
        <shortName>RGS3</shortName>
    </recommendedName>
    <alternativeName>
        <fullName>C2PA</fullName>
    </alternativeName>
</protein>
<gene>
    <name type="primary">Rgs3</name>
</gene>
<proteinExistence type="evidence at protein level"/>
<comment type="function">
    <text evidence="7 8">Down-regulates signaling from heterotrimeric G-proteins by increasing the GTPase activity of the alpha subunits, thereby driving them into their inactive GDP-bound form. Down-regulates G-protein-mediated release of inositol phosphates and activation of MAP kinases.</text>
</comment>
<comment type="subunit">
    <text evidence="1">Binds the GNB1-GNG2 heterodimer (By similarity). Binds EFNB1 and EFNB2.</text>
</comment>
<comment type="subcellular location">
    <subcellularLocation>
        <location evidence="14">Cytoplasm</location>
    </subcellularLocation>
    <subcellularLocation>
        <location evidence="2">Cell membrane</location>
        <topology evidence="2">Peripheral membrane protein</topology>
        <orientation evidence="2">Cytoplasmic side</orientation>
    </subcellularLocation>
    <text evidence="2">Long isoforms are cytoplasmic and associated with the plasma membrane. Short isoforms are nuclear.</text>
</comment>
<comment type="subcellular location">
    <molecule>Isoform 2</molecule>
    <subcellularLocation>
        <location evidence="7">Cytoplasm</location>
    </subcellularLocation>
</comment>
<comment type="subcellular location">
    <molecule>Isoform 3</molecule>
    <subcellularLocation>
        <location evidence="8">Nucleus</location>
    </subcellularLocation>
</comment>
<comment type="subcellular location">
    <molecule>Isoform 4</molecule>
    <subcellularLocation>
        <location evidence="14">Nucleus</location>
    </subcellularLocation>
</comment>
<comment type="alternative products">
    <event type="alternative splicing"/>
    <isoform>
        <id>Q9DC04-3</id>
        <name>1</name>
        <sequence type="displayed"/>
    </isoform>
    <isoform>
        <id>Q9DC04-1</id>
        <name>5</name>
        <name>Long</name>
        <sequence type="described" ref="VSP_013966"/>
    </isoform>
    <isoform>
        <id>Q9DC04-2</id>
        <name>6</name>
        <name>Short</name>
        <sequence type="described" ref="VSP_005663 VSP_005664"/>
    </isoform>
    <isoform>
        <id>Q9DC04-4</id>
        <name>2</name>
        <sequence type="described" ref="VSP_013970"/>
    </isoform>
    <isoform>
        <id>Q9DC04-5</id>
        <name>3</name>
        <name>C2PA</name>
        <sequence type="described" ref="VSP_013967 VSP_013968 VSP_013969"/>
    </isoform>
    <isoform>
        <id>Q9DC04-6</id>
        <name>4</name>
        <sequence type="described" ref="VSP_013968 VSP_013969"/>
    </isoform>
</comment>
<comment type="tissue specificity">
    <text evidence="6">Detected in embryos from E8.5-16.5 in cortical ventricular zone, dorsal root ganglia and cerebellar primordia. Isoform 3 is detected in testis and in spermatocytes from newborn mice. Levels increase and reach a maximum after 21 days; after this they decrease again. Long isoforms are widely expressed.</text>
</comment>
<comment type="PTM">
    <text evidence="1">Phosphorylated by cyclic GMP-dependent protein kinase.</text>
</comment>
<comment type="PTM">
    <text evidence="1">ISGylated.</text>
</comment>
<comment type="miscellaneous">
    <molecule>Isoform 3</molecule>
    <text evidence="8">Nuclear.</text>
</comment>
<organism>
    <name type="scientific">Mus musculus</name>
    <name type="common">Mouse</name>
    <dbReference type="NCBI Taxonomy" id="10090"/>
    <lineage>
        <taxon>Eukaryota</taxon>
        <taxon>Metazoa</taxon>
        <taxon>Chordata</taxon>
        <taxon>Craniata</taxon>
        <taxon>Vertebrata</taxon>
        <taxon>Euteleostomi</taxon>
        <taxon>Mammalia</taxon>
        <taxon>Eutheria</taxon>
        <taxon>Euarchontoglires</taxon>
        <taxon>Glires</taxon>
        <taxon>Rodentia</taxon>
        <taxon>Myomorpha</taxon>
        <taxon>Muroidea</taxon>
        <taxon>Muridae</taxon>
        <taxon>Murinae</taxon>
        <taxon>Mus</taxon>
        <taxon>Mus</taxon>
    </lineage>
</organism>
<evidence type="ECO:0000250" key="1"/>
<evidence type="ECO:0000250" key="2">
    <source>
        <dbReference type="UniProtKB" id="P49796"/>
    </source>
</evidence>
<evidence type="ECO:0000255" key="3">
    <source>
        <dbReference type="PROSITE-ProRule" id="PRU00143"/>
    </source>
</evidence>
<evidence type="ECO:0000255" key="4">
    <source>
        <dbReference type="PROSITE-ProRule" id="PRU00171"/>
    </source>
</evidence>
<evidence type="ECO:0000256" key="5">
    <source>
        <dbReference type="SAM" id="MobiDB-lite"/>
    </source>
</evidence>
<evidence type="ECO:0000269" key="6">
    <source>
    </source>
</evidence>
<evidence type="ECO:0000269" key="7">
    <source>
    </source>
</evidence>
<evidence type="ECO:0000269" key="8">
    <source>
    </source>
</evidence>
<evidence type="ECO:0000303" key="9">
    <source>
    </source>
</evidence>
<evidence type="ECO:0000303" key="10">
    <source>
    </source>
</evidence>
<evidence type="ECO:0000303" key="11">
    <source>
    </source>
</evidence>
<evidence type="ECO:0000303" key="12">
    <source>
    </source>
</evidence>
<evidence type="ECO:0000303" key="13">
    <source ref="3"/>
</evidence>
<evidence type="ECO:0000305" key="14"/>
<evidence type="ECO:0007744" key="15">
    <source>
    </source>
</evidence>
<evidence type="ECO:0007829" key="16">
    <source>
        <dbReference type="PDB" id="1WHD"/>
    </source>
</evidence>
<sequence length="966" mass="106219">MNRFNGLCKVCSERRYRQITIRRGKDGFGFTICCDSPVRVQAVDSGGPAERAGLQQLDTVLQLNERPVEHWKCVELAHEIRSCPSEIILLVWRVVPQIKPGPDGGVLRRASCKSTHDLLSPPNKREKNCTHGAPVRPEQRHSCHLVCDSSDGLLLGGWERYTEVGKRSGQHTLPALSRTTTPTDPNYIILAPLNPGSQLLRPVYQEDTIPEEPGTTTKGKSYTGLGKKSRLMKTVQTMKGHSNYQDCSALRPHIPHSSYGTYVTLAPKVLVFPVFVQPLDLCNPARTLLLSEELLLYEGRNKTSQVTLFAYSDLLLFTKEEEPGRCDVLRNPLYLQSVKLQEGSSEDLKFCVLYLAEKAECLFTLEAHSQEQKKRVCWCLSENIAKQQQLAAPPTERKMFETEADEKEMPLVEGKGPGAEEPAPSKNPSPGQELPPGQDLPPSKDPSPSQELPAGQDLPPSKDPSPSQELPAGQDLPPSKDPSPSQELPVGQDLPPRKDSSGQEAAPGPESPSSEDIATCPKPPQSPETSTSKDSPPGQGSSPTTELPSCQGLPAGQESTSQDPLLSQEPPVIPESSASVQKRLPSQESPSSLGSLPEKDLAEQTISSGEPPVATGAVLPASRPNFVIPEVRLDNAYSQLDGAHGGSSGEDEDAEEGEEGGEGEEDEEDDTSDDNYGDRSEAKRSSLIETGQGAEGGFSLRVQNSLRRRTHSEGSLLQESRGPCFASDTTLHCSDGEGATSTWAIPSPRTLKKELGRNGGSMHHLSLFFTGHRKMSGTDLTECDEASRKRKSKNIAKDMKNKLAIFRRRNESPGAQPASKTDKTTKSFKPTSEEALKWSESLEKLLLHKYGLEVFQAFLRTEFSEENLEFWLACEDFKKVKSQSKMAAKAKKIFAEFIAIQACKEVNLDSYTREHTKENLQSITRGCFDLAQKRIFGLMEKDSYPRFLRSDLYLDLINQKKMSPPL</sequence>
<feature type="chain" id="PRO_0000204183" description="Regulator of G-protein signaling 3">
    <location>
        <begin position="1"/>
        <end position="966"/>
    </location>
</feature>
<feature type="domain" description="PDZ" evidence="3">
    <location>
        <begin position="18"/>
        <end position="95"/>
    </location>
</feature>
<feature type="domain" description="RGS" evidence="4">
    <location>
        <begin position="841"/>
        <end position="966"/>
    </location>
</feature>
<feature type="region of interest" description="Disordered" evidence="5">
    <location>
        <begin position="115"/>
        <end position="135"/>
    </location>
</feature>
<feature type="region of interest" description="Disordered" evidence="5">
    <location>
        <begin position="403"/>
        <end position="618"/>
    </location>
</feature>
<feature type="region of interest" description="Disordered" evidence="5">
    <location>
        <begin position="637"/>
        <end position="704"/>
    </location>
</feature>
<feature type="region of interest" description="Disordered" evidence="5">
    <location>
        <begin position="806"/>
        <end position="830"/>
    </location>
</feature>
<feature type="compositionally biased region" description="Polar residues" evidence="5">
    <location>
        <begin position="527"/>
        <end position="548"/>
    </location>
</feature>
<feature type="compositionally biased region" description="Polar residues" evidence="5">
    <location>
        <begin position="576"/>
        <end position="594"/>
    </location>
</feature>
<feature type="compositionally biased region" description="Acidic residues" evidence="5">
    <location>
        <begin position="649"/>
        <end position="675"/>
    </location>
</feature>
<feature type="compositionally biased region" description="Basic and acidic residues" evidence="5">
    <location>
        <begin position="676"/>
        <end position="686"/>
    </location>
</feature>
<feature type="compositionally biased region" description="Basic and acidic residues" evidence="5">
    <location>
        <begin position="820"/>
        <end position="830"/>
    </location>
</feature>
<feature type="modified residue" description="Omega-N-methylarginine" evidence="2">
    <location>
        <position position="167"/>
    </location>
</feature>
<feature type="modified residue" description="Phosphoserine" evidence="15">
    <location>
        <position position="712"/>
    </location>
</feature>
<feature type="modified residue" description="Phosphoserine" evidence="15">
    <location>
        <position position="715"/>
    </location>
</feature>
<feature type="modified residue" description="Phosphoserine" evidence="15">
    <location>
        <position position="747"/>
    </location>
</feature>
<feature type="modified residue" description="Phosphoserine" evidence="15">
    <location>
        <position position="776"/>
    </location>
</feature>
<feature type="splice variant" id="VSP_013966" description="In isoform 5." evidence="11 12">
    <location>
        <begin position="1"/>
        <end position="398"/>
    </location>
</feature>
<feature type="splice variant" id="VSP_013967" description="In isoform 3." evidence="9">
    <original>MNRFNGLCKVCSERRYR</original>
    <variation>MERPHQDASLSKKDACTQTYPPRRRIRHAQVQDAGQLKLSIDAQDRVLLPHIIEGKGLMSREPGICDPYVKVSLIPEDSQLPCQTTQIIPDCRDPAFHEHFFFPVPEEGDQKRLLVTVWNRASETRQHTLIGCMSFGVRSLLTPDKEISGWYYLLGEDLGRTKHLKVARRRLQPLRDMLLRMPGEGDPENGEKL</variation>
    <location>
        <begin position="1"/>
        <end position="17"/>
    </location>
</feature>
<feature type="splice variant" id="VSP_005663" description="In isoform 6." evidence="14">
    <location>
        <begin position="399"/>
        <end position="773"/>
    </location>
</feature>
<feature type="splice variant" id="VSP_013968" description="In isoform 3 and isoform 4." evidence="9 12 13">
    <original>MFETEADEKEMPLVEGKGPGAEEPAPSKNPSPGQE</original>
    <variation>KLHPYGSLQQEMGPVTSISATQDRSFTSSGQTLIG</variation>
    <location>
        <begin position="399"/>
        <end position="433"/>
    </location>
</feature>
<feature type="splice variant" id="VSP_013969" description="In isoform 3 and isoform 4." evidence="9 12 13">
    <location>
        <begin position="434"/>
        <end position="966"/>
    </location>
</feature>
<feature type="splice variant" id="VSP_013970" description="In isoform 2." evidence="10">
    <location>
        <begin position="455"/>
        <end position="490"/>
    </location>
</feature>
<feature type="splice variant" id="VSP_005664" description="In isoform 6." evidence="14">
    <original>KMSGTDLTECDEASRKRKSKNI</original>
    <variation>MLRGMYLTRNGNLQRRHTMKE</variation>
    <location>
        <begin position="774"/>
        <end position="795"/>
    </location>
</feature>
<feature type="sequence conflict" description="In Ref. 3; AAL37173." evidence="14" ref="3">
    <original>T</original>
    <variation>A</variation>
    <location>
        <position position="179"/>
    </location>
</feature>
<feature type="sequence conflict" description="In Ref. 1; AAK38878." evidence="14" ref="1">
    <original>S</original>
    <variation>P</variation>
    <location>
        <position position="501"/>
    </location>
</feature>
<feature type="strand" evidence="16">
    <location>
        <begin position="18"/>
        <end position="22"/>
    </location>
</feature>
<feature type="strand" evidence="16">
    <location>
        <begin position="25"/>
        <end position="29"/>
    </location>
</feature>
<feature type="strand" evidence="16">
    <location>
        <begin position="35"/>
        <end position="37"/>
    </location>
</feature>
<feature type="helix" evidence="16">
    <location>
        <begin position="48"/>
        <end position="52"/>
    </location>
</feature>
<feature type="strand" evidence="16">
    <location>
        <begin position="59"/>
        <end position="63"/>
    </location>
</feature>
<feature type="helix" evidence="16">
    <location>
        <begin position="73"/>
        <end position="82"/>
    </location>
</feature>
<feature type="strand" evidence="16">
    <location>
        <begin position="84"/>
        <end position="93"/>
    </location>
</feature>
<dbReference type="EMBL" id="AJ250999">
    <property type="protein sequence ID" value="CAB66146.1"/>
    <property type="molecule type" value="mRNA"/>
</dbReference>
<dbReference type="EMBL" id="AF350047">
    <property type="protein sequence ID" value="AAK38878.1"/>
    <property type="molecule type" value="mRNA"/>
</dbReference>
<dbReference type="EMBL" id="AF319519">
    <property type="protein sequence ID" value="AAL37173.1"/>
    <property type="molecule type" value="mRNA"/>
</dbReference>
<dbReference type="EMBL" id="AK004648">
    <property type="protein sequence ID" value="BAB23439.1"/>
    <property type="molecule type" value="mRNA"/>
</dbReference>
<dbReference type="EMBL" id="AK028445">
    <property type="protein sequence ID" value="BAC25954.1"/>
    <property type="molecule type" value="mRNA"/>
</dbReference>
<dbReference type="EMBL" id="AL672272">
    <property type="status" value="NOT_ANNOTATED_CDS"/>
    <property type="molecule type" value="Genomic_DNA"/>
</dbReference>
<dbReference type="EMBL" id="BC033449">
    <property type="protein sequence ID" value="AAH33449.1"/>
    <property type="molecule type" value="mRNA"/>
</dbReference>
<dbReference type="EMBL" id="AF215670">
    <property type="protein sequence ID" value="AAF34627.1"/>
    <property type="molecule type" value="mRNA"/>
</dbReference>
<dbReference type="EMBL" id="AF215669">
    <property type="protein sequence ID" value="AAF34626.1"/>
    <property type="molecule type" value="mRNA"/>
</dbReference>
<dbReference type="CCDS" id="CCDS18246.1">
    <molecule id="Q9DC04-5"/>
</dbReference>
<dbReference type="CCDS" id="CCDS38776.1">
    <molecule id="Q9DC04-6"/>
</dbReference>
<dbReference type="CCDS" id="CCDS51202.1">
    <molecule id="Q9DC04-3"/>
</dbReference>
<dbReference type="CCDS" id="CCDS80110.1">
    <molecule id="Q9DC04-1"/>
</dbReference>
<dbReference type="RefSeq" id="NP_001075119.1">
    <molecule id="Q9DC04-6"/>
    <property type="nucleotide sequence ID" value="NM_001081650.3"/>
</dbReference>
<dbReference type="RefSeq" id="NP_001297635.1">
    <molecule id="Q9DC04-1"/>
    <property type="nucleotide sequence ID" value="NM_001310706.2"/>
</dbReference>
<dbReference type="RefSeq" id="NP_062365.2">
    <property type="nucleotide sequence ID" value="NM_019492.3"/>
</dbReference>
<dbReference type="RefSeq" id="NP_599018.3">
    <molecule id="Q9DC04-3"/>
    <property type="nucleotide sequence ID" value="NM_134257.4"/>
</dbReference>
<dbReference type="RefSeq" id="XP_006538130.1">
    <property type="nucleotide sequence ID" value="XM_006538067.3"/>
</dbReference>
<dbReference type="RefSeq" id="XP_006538131.1">
    <molecule id="Q9DC04-1"/>
    <property type="nucleotide sequence ID" value="XM_006538068.5"/>
</dbReference>
<dbReference type="RefSeq" id="XP_006538132.1">
    <molecule id="Q9DC04-1"/>
    <property type="nucleotide sequence ID" value="XM_006538069.3"/>
</dbReference>
<dbReference type="RefSeq" id="XP_006538133.1">
    <molecule id="Q9DC04-1"/>
    <property type="nucleotide sequence ID" value="XM_006538070.4"/>
</dbReference>
<dbReference type="RefSeq" id="XP_017175797.1">
    <property type="nucleotide sequence ID" value="XM_017320308.1"/>
</dbReference>
<dbReference type="PDB" id="1WHD">
    <property type="method" value="NMR"/>
    <property type="chains" value="A=18-94"/>
</dbReference>
<dbReference type="PDBsum" id="1WHD"/>
<dbReference type="SMR" id="Q9DC04"/>
<dbReference type="BioGRID" id="206112">
    <property type="interactions" value="2"/>
</dbReference>
<dbReference type="FunCoup" id="Q9DC04">
    <property type="interactions" value="2057"/>
</dbReference>
<dbReference type="IntAct" id="Q9DC04">
    <property type="interactions" value="1"/>
</dbReference>
<dbReference type="MINT" id="Q9DC04"/>
<dbReference type="STRING" id="10090.ENSMUSP00000081569"/>
<dbReference type="iPTMnet" id="Q9DC04"/>
<dbReference type="PhosphoSitePlus" id="Q9DC04"/>
<dbReference type="SwissPalm" id="Q9DC04"/>
<dbReference type="jPOST" id="Q9DC04"/>
<dbReference type="PaxDb" id="10090-ENSMUSP00000081569"/>
<dbReference type="PeptideAtlas" id="Q9DC04"/>
<dbReference type="ProteomicsDB" id="254953">
    <molecule id="Q9DC04-3"/>
</dbReference>
<dbReference type="ProteomicsDB" id="254954">
    <molecule id="Q9DC04-1"/>
</dbReference>
<dbReference type="ProteomicsDB" id="254955">
    <molecule id="Q9DC04-2"/>
</dbReference>
<dbReference type="ProteomicsDB" id="254956">
    <molecule id="Q9DC04-4"/>
</dbReference>
<dbReference type="ProteomicsDB" id="254957">
    <molecule id="Q9DC04-5"/>
</dbReference>
<dbReference type="ProteomicsDB" id="254958">
    <molecule id="Q9DC04-6"/>
</dbReference>
<dbReference type="Pumba" id="Q9DC04"/>
<dbReference type="Antibodypedia" id="15339">
    <property type="antibodies" value="169 antibodies from 29 providers"/>
</dbReference>
<dbReference type="DNASU" id="50780"/>
<dbReference type="Ensembl" id="ENSMUST00000084521.11">
    <molecule id="Q9DC04-3"/>
    <property type="protein sequence ID" value="ENSMUSP00000081569.5"/>
    <property type="gene ID" value="ENSMUSG00000059810.19"/>
</dbReference>
<dbReference type="Ensembl" id="ENSMUST00000107420.8">
    <molecule id="Q9DC04-1"/>
    <property type="protein sequence ID" value="ENSMUSP00000103043.2"/>
    <property type="gene ID" value="ENSMUSG00000059810.19"/>
</dbReference>
<dbReference type="Ensembl" id="ENSMUST00000107424.2">
    <molecule id="Q9DC04-6"/>
    <property type="protein sequence ID" value="ENSMUSP00000103047.2"/>
    <property type="gene ID" value="ENSMUSG00000059810.19"/>
</dbReference>
<dbReference type="GeneID" id="50780"/>
<dbReference type="KEGG" id="mmu:50780"/>
<dbReference type="UCSC" id="uc008tfe.2">
    <molecule id="Q9DC04-6"/>
    <property type="organism name" value="mouse"/>
</dbReference>
<dbReference type="UCSC" id="uc008tfg.1">
    <molecule id="Q9DC04-1"/>
    <property type="organism name" value="mouse"/>
</dbReference>
<dbReference type="UCSC" id="uc008tfh.2">
    <molecule id="Q9DC04-3"/>
    <property type="organism name" value="mouse"/>
</dbReference>
<dbReference type="AGR" id="MGI:1354734"/>
<dbReference type="CTD" id="5998"/>
<dbReference type="MGI" id="MGI:1354734">
    <property type="gene designation" value="Rgs3"/>
</dbReference>
<dbReference type="VEuPathDB" id="HostDB:ENSMUSG00000059810"/>
<dbReference type="eggNOG" id="KOG3589">
    <property type="taxonomic scope" value="Eukaryota"/>
</dbReference>
<dbReference type="GeneTree" id="ENSGT00940000154416"/>
<dbReference type="HOGENOM" id="CLU_005574_0_0_1"/>
<dbReference type="InParanoid" id="Q9DC04"/>
<dbReference type="OrthoDB" id="196547at2759"/>
<dbReference type="PhylomeDB" id="Q9DC04"/>
<dbReference type="TreeFam" id="TF351952"/>
<dbReference type="Reactome" id="R-MMU-416476">
    <property type="pathway name" value="G alpha (q) signalling events"/>
</dbReference>
<dbReference type="Reactome" id="R-MMU-418594">
    <property type="pathway name" value="G alpha (i) signalling events"/>
</dbReference>
<dbReference type="BioGRID-ORCS" id="50780">
    <property type="hits" value="1 hit in 61 CRISPR screens"/>
</dbReference>
<dbReference type="ChiTaRS" id="Rgs3">
    <property type="organism name" value="mouse"/>
</dbReference>
<dbReference type="EvolutionaryTrace" id="Q9DC04"/>
<dbReference type="PRO" id="PR:Q9DC04"/>
<dbReference type="Proteomes" id="UP000000589">
    <property type="component" value="Chromosome 4"/>
</dbReference>
<dbReference type="RNAct" id="Q9DC04">
    <property type="molecule type" value="protein"/>
</dbReference>
<dbReference type="Bgee" id="ENSMUSG00000059810">
    <property type="expression patterns" value="Expressed in animal zygote and 155 other cell types or tissues"/>
</dbReference>
<dbReference type="ExpressionAtlas" id="Q9DC04">
    <property type="expression patterns" value="baseline and differential"/>
</dbReference>
<dbReference type="GO" id="GO:0005737">
    <property type="term" value="C:cytoplasm"/>
    <property type="evidence" value="ECO:0000304"/>
    <property type="project" value="MGI"/>
</dbReference>
<dbReference type="GO" id="GO:0005634">
    <property type="term" value="C:nucleus"/>
    <property type="evidence" value="ECO:0000314"/>
    <property type="project" value="MGI"/>
</dbReference>
<dbReference type="GO" id="GO:0005886">
    <property type="term" value="C:plasma membrane"/>
    <property type="evidence" value="ECO:0000304"/>
    <property type="project" value="MGI"/>
</dbReference>
<dbReference type="GO" id="GO:0005096">
    <property type="term" value="F:GTPase activator activity"/>
    <property type="evidence" value="ECO:0000304"/>
    <property type="project" value="MGI"/>
</dbReference>
<dbReference type="GO" id="GO:0007186">
    <property type="term" value="P:G protein-coupled receptor signaling pathway"/>
    <property type="evidence" value="ECO:0000304"/>
    <property type="project" value="MGI"/>
</dbReference>
<dbReference type="GO" id="GO:0009968">
    <property type="term" value="P:negative regulation of signal transduction"/>
    <property type="evidence" value="ECO:0007669"/>
    <property type="project" value="UniProtKB-KW"/>
</dbReference>
<dbReference type="CDD" id="cd06711">
    <property type="entry name" value="PDZ_RGS3-like"/>
    <property type="match status" value="1"/>
</dbReference>
<dbReference type="CDD" id="cd08713">
    <property type="entry name" value="RGS_RGS3"/>
    <property type="match status" value="1"/>
</dbReference>
<dbReference type="FunFam" id="1.10.167.10:FF:000001">
    <property type="entry name" value="Putative regulator of g-protein signaling 12"/>
    <property type="match status" value="1"/>
</dbReference>
<dbReference type="FunFam" id="1.10.196.10:FF:000003">
    <property type="entry name" value="regulator of G-protein signaling 3 isoform X1"/>
    <property type="match status" value="1"/>
</dbReference>
<dbReference type="FunFam" id="2.30.42.10:FF:000098">
    <property type="entry name" value="regulator of G-protein signaling 3 isoform X1"/>
    <property type="match status" value="1"/>
</dbReference>
<dbReference type="FunFam" id="1.10.196.10:FF:000001">
    <property type="entry name" value="Regulator of G-protein signaling 8"/>
    <property type="match status" value="1"/>
</dbReference>
<dbReference type="Gene3D" id="1.10.196.10">
    <property type="match status" value="2"/>
</dbReference>
<dbReference type="Gene3D" id="2.30.42.10">
    <property type="match status" value="1"/>
</dbReference>
<dbReference type="Gene3D" id="2.30.29.30">
    <property type="entry name" value="Pleckstrin-homology domain (PH domain)/Phosphotyrosine-binding domain (PTB)"/>
    <property type="match status" value="1"/>
</dbReference>
<dbReference type="Gene3D" id="1.10.167.10">
    <property type="entry name" value="Regulator of G-protein Signalling 4, domain 2"/>
    <property type="match status" value="1"/>
</dbReference>
<dbReference type="InterPro" id="IPR001478">
    <property type="entry name" value="PDZ"/>
</dbReference>
<dbReference type="InterPro" id="IPR036034">
    <property type="entry name" value="PDZ_sf"/>
</dbReference>
<dbReference type="InterPro" id="IPR011993">
    <property type="entry name" value="PH-like_dom_sf"/>
</dbReference>
<dbReference type="InterPro" id="IPR016137">
    <property type="entry name" value="RGS"/>
</dbReference>
<dbReference type="InterPro" id="IPR034951">
    <property type="entry name" value="RGS_RGS3"/>
</dbReference>
<dbReference type="InterPro" id="IPR036305">
    <property type="entry name" value="RGS_sf"/>
</dbReference>
<dbReference type="InterPro" id="IPR024066">
    <property type="entry name" value="RGS_subdom1/3"/>
</dbReference>
<dbReference type="InterPro" id="IPR044926">
    <property type="entry name" value="RGS_subdomain_2"/>
</dbReference>
<dbReference type="PANTHER" id="PTHR46848">
    <property type="entry name" value="REGULATOR OF G-PROTEIN SIGNALING 3"/>
    <property type="match status" value="1"/>
</dbReference>
<dbReference type="PANTHER" id="PTHR46848:SF1">
    <property type="entry name" value="REGULATOR OF G-PROTEIN SIGNALING 3"/>
    <property type="match status" value="1"/>
</dbReference>
<dbReference type="Pfam" id="PF00595">
    <property type="entry name" value="PDZ"/>
    <property type="match status" value="1"/>
</dbReference>
<dbReference type="Pfam" id="PF00615">
    <property type="entry name" value="RGS"/>
    <property type="match status" value="1"/>
</dbReference>
<dbReference type="PRINTS" id="PR01301">
    <property type="entry name" value="RGSPROTEIN"/>
</dbReference>
<dbReference type="SMART" id="SM00228">
    <property type="entry name" value="PDZ"/>
    <property type="match status" value="1"/>
</dbReference>
<dbReference type="SMART" id="SM00315">
    <property type="entry name" value="RGS"/>
    <property type="match status" value="1"/>
</dbReference>
<dbReference type="SUPFAM" id="SSF50156">
    <property type="entry name" value="PDZ domain-like"/>
    <property type="match status" value="1"/>
</dbReference>
<dbReference type="SUPFAM" id="SSF50729">
    <property type="entry name" value="PH domain-like"/>
    <property type="match status" value="1"/>
</dbReference>
<dbReference type="SUPFAM" id="SSF48097">
    <property type="entry name" value="Regulator of G-protein signaling, RGS"/>
    <property type="match status" value="1"/>
</dbReference>
<dbReference type="PROSITE" id="PS50106">
    <property type="entry name" value="PDZ"/>
    <property type="match status" value="1"/>
</dbReference>
<dbReference type="PROSITE" id="PS50132">
    <property type="entry name" value="RGS"/>
    <property type="match status" value="1"/>
</dbReference>
<accession>Q9DC04</accession>
<accession>Q5SRB1</accession>
<accession>Q5SRB4</accession>
<accession>Q5SRB8</accession>
<accession>Q8CEE3</accession>
<accession>Q8VI25</accession>
<accession>Q925G9</accession>
<accession>Q9JL22</accession>
<accession>Q9JL23</accession>
<accession>Q9QXA2</accession>
<keyword id="KW-0002">3D-structure</keyword>
<keyword id="KW-0025">Alternative splicing</keyword>
<keyword id="KW-1003">Cell membrane</keyword>
<keyword id="KW-0963">Cytoplasm</keyword>
<keyword id="KW-0472">Membrane</keyword>
<keyword id="KW-0488">Methylation</keyword>
<keyword id="KW-0539">Nucleus</keyword>
<keyword id="KW-0597">Phosphoprotein</keyword>
<keyword id="KW-1185">Reference proteome</keyword>
<keyword id="KW-0734">Signal transduction inhibitor</keyword>
<keyword id="KW-0832">Ubl conjugation</keyword>
<name>RGS3_MOUSE</name>
<reference key="1">
    <citation type="journal article" date="2000" name="FEBS Lett.">
        <title>C2PA, a new protein expressed during mouse spermatogenesis.</title>
        <authorList>
            <person name="Linares J.-L."/>
            <person name="Wendling C."/>
            <person name="Tomasetto C."/>
            <person name="Rio M.-C."/>
        </authorList>
    </citation>
    <scope>NUCLEOTIDE SEQUENCE [MRNA] (ISOFORM 3)</scope>
    <scope>TISSUE SPECIFICITY</scope>
    <source>
        <tissue>Testis</tissue>
    </source>
</reference>
<reference key="2">
    <citation type="journal article" date="2001" name="Cell">
        <title>Ephrin-B reverse signaling is mediated by a novel PDZ-RGS protein and selectively inhibits G protein-coupled chemoattraction.</title>
        <authorList>
            <person name="Lu Q."/>
            <person name="Sun E.E."/>
            <person name="Klein R.S."/>
            <person name="Flanagan J.G."/>
        </authorList>
    </citation>
    <scope>NUCLEOTIDE SEQUENCE [MRNA] (ISOFORM 2)</scope>
    <scope>FUNCTION</scope>
    <scope>INTERACTION WITH EPHRINS</scope>
    <scope>SUBCELLULAR LOCATION</scope>
    <source>
        <tissue>Embryo</tissue>
    </source>
</reference>
<reference key="3">
    <citation type="submission" date="2000-11" db="EMBL/GenBank/DDBJ databases">
        <title>EPP1, a novel PDZ protein expressed in the arterial endothelial cells binding to B ephrins.</title>
        <authorList>
            <person name="Huang W.-Y."/>
            <person name="Izumo S."/>
        </authorList>
    </citation>
    <scope>NUCLEOTIDE SEQUENCE [MRNA] (ISOFORM 4)</scope>
</reference>
<reference key="4">
    <citation type="journal article" date="2005" name="Science">
        <title>The transcriptional landscape of the mammalian genome.</title>
        <authorList>
            <person name="Carninci P."/>
            <person name="Kasukawa T."/>
            <person name="Katayama S."/>
            <person name="Gough J."/>
            <person name="Frith M.C."/>
            <person name="Maeda N."/>
            <person name="Oyama R."/>
            <person name="Ravasi T."/>
            <person name="Lenhard B."/>
            <person name="Wells C."/>
            <person name="Kodzius R."/>
            <person name="Shimokawa K."/>
            <person name="Bajic V.B."/>
            <person name="Brenner S.E."/>
            <person name="Batalov S."/>
            <person name="Forrest A.R."/>
            <person name="Zavolan M."/>
            <person name="Davis M.J."/>
            <person name="Wilming L.G."/>
            <person name="Aidinis V."/>
            <person name="Allen J.E."/>
            <person name="Ambesi-Impiombato A."/>
            <person name="Apweiler R."/>
            <person name="Aturaliya R.N."/>
            <person name="Bailey T.L."/>
            <person name="Bansal M."/>
            <person name="Baxter L."/>
            <person name="Beisel K.W."/>
            <person name="Bersano T."/>
            <person name="Bono H."/>
            <person name="Chalk A.M."/>
            <person name="Chiu K.P."/>
            <person name="Choudhary V."/>
            <person name="Christoffels A."/>
            <person name="Clutterbuck D.R."/>
            <person name="Crowe M.L."/>
            <person name="Dalla E."/>
            <person name="Dalrymple B.P."/>
            <person name="de Bono B."/>
            <person name="Della Gatta G."/>
            <person name="di Bernardo D."/>
            <person name="Down T."/>
            <person name="Engstrom P."/>
            <person name="Fagiolini M."/>
            <person name="Faulkner G."/>
            <person name="Fletcher C.F."/>
            <person name="Fukushima T."/>
            <person name="Furuno M."/>
            <person name="Futaki S."/>
            <person name="Gariboldi M."/>
            <person name="Georgii-Hemming P."/>
            <person name="Gingeras T.R."/>
            <person name="Gojobori T."/>
            <person name="Green R.E."/>
            <person name="Gustincich S."/>
            <person name="Harbers M."/>
            <person name="Hayashi Y."/>
            <person name="Hensch T.K."/>
            <person name="Hirokawa N."/>
            <person name="Hill D."/>
            <person name="Huminiecki L."/>
            <person name="Iacono M."/>
            <person name="Ikeo K."/>
            <person name="Iwama A."/>
            <person name="Ishikawa T."/>
            <person name="Jakt M."/>
            <person name="Kanapin A."/>
            <person name="Katoh M."/>
            <person name="Kawasawa Y."/>
            <person name="Kelso J."/>
            <person name="Kitamura H."/>
            <person name="Kitano H."/>
            <person name="Kollias G."/>
            <person name="Krishnan S.P."/>
            <person name="Kruger A."/>
            <person name="Kummerfeld S.K."/>
            <person name="Kurochkin I.V."/>
            <person name="Lareau L.F."/>
            <person name="Lazarevic D."/>
            <person name="Lipovich L."/>
            <person name="Liu J."/>
            <person name="Liuni S."/>
            <person name="McWilliam S."/>
            <person name="Madan Babu M."/>
            <person name="Madera M."/>
            <person name="Marchionni L."/>
            <person name="Matsuda H."/>
            <person name="Matsuzawa S."/>
            <person name="Miki H."/>
            <person name="Mignone F."/>
            <person name="Miyake S."/>
            <person name="Morris K."/>
            <person name="Mottagui-Tabar S."/>
            <person name="Mulder N."/>
            <person name="Nakano N."/>
            <person name="Nakauchi H."/>
            <person name="Ng P."/>
            <person name="Nilsson R."/>
            <person name="Nishiguchi S."/>
            <person name="Nishikawa S."/>
            <person name="Nori F."/>
            <person name="Ohara O."/>
            <person name="Okazaki Y."/>
            <person name="Orlando V."/>
            <person name="Pang K.C."/>
            <person name="Pavan W.J."/>
            <person name="Pavesi G."/>
            <person name="Pesole G."/>
            <person name="Petrovsky N."/>
            <person name="Piazza S."/>
            <person name="Reed J."/>
            <person name="Reid J.F."/>
            <person name="Ring B.Z."/>
            <person name="Ringwald M."/>
            <person name="Rost B."/>
            <person name="Ruan Y."/>
            <person name="Salzberg S.L."/>
            <person name="Sandelin A."/>
            <person name="Schneider C."/>
            <person name="Schoenbach C."/>
            <person name="Sekiguchi K."/>
            <person name="Semple C.A."/>
            <person name="Seno S."/>
            <person name="Sessa L."/>
            <person name="Sheng Y."/>
            <person name="Shibata Y."/>
            <person name="Shimada H."/>
            <person name="Shimada K."/>
            <person name="Silva D."/>
            <person name="Sinclair B."/>
            <person name="Sperling S."/>
            <person name="Stupka E."/>
            <person name="Sugiura K."/>
            <person name="Sultana R."/>
            <person name="Takenaka Y."/>
            <person name="Taki K."/>
            <person name="Tammoja K."/>
            <person name="Tan S.L."/>
            <person name="Tang S."/>
            <person name="Taylor M.S."/>
            <person name="Tegner J."/>
            <person name="Teichmann S.A."/>
            <person name="Ueda H.R."/>
            <person name="van Nimwegen E."/>
            <person name="Verardo R."/>
            <person name="Wei C.L."/>
            <person name="Yagi K."/>
            <person name="Yamanishi H."/>
            <person name="Zabarovsky E."/>
            <person name="Zhu S."/>
            <person name="Zimmer A."/>
            <person name="Hide W."/>
            <person name="Bult C."/>
            <person name="Grimmond S.M."/>
            <person name="Teasdale R.D."/>
            <person name="Liu E.T."/>
            <person name="Brusic V."/>
            <person name="Quackenbush J."/>
            <person name="Wahlestedt C."/>
            <person name="Mattick J.S."/>
            <person name="Hume D.A."/>
            <person name="Kai C."/>
            <person name="Sasaki D."/>
            <person name="Tomaru Y."/>
            <person name="Fukuda S."/>
            <person name="Kanamori-Katayama M."/>
            <person name="Suzuki M."/>
            <person name="Aoki J."/>
            <person name="Arakawa T."/>
            <person name="Iida J."/>
            <person name="Imamura K."/>
            <person name="Itoh M."/>
            <person name="Kato T."/>
            <person name="Kawaji H."/>
            <person name="Kawagashira N."/>
            <person name="Kawashima T."/>
            <person name="Kojima M."/>
            <person name="Kondo S."/>
            <person name="Konno H."/>
            <person name="Nakano K."/>
            <person name="Ninomiya N."/>
            <person name="Nishio T."/>
            <person name="Okada M."/>
            <person name="Plessy C."/>
            <person name="Shibata K."/>
            <person name="Shiraki T."/>
            <person name="Suzuki S."/>
            <person name="Tagami M."/>
            <person name="Waki K."/>
            <person name="Watahiki A."/>
            <person name="Okamura-Oho Y."/>
            <person name="Suzuki H."/>
            <person name="Kawai J."/>
            <person name="Hayashizaki Y."/>
        </authorList>
    </citation>
    <scope>NUCLEOTIDE SEQUENCE [LARGE SCALE MRNA] (ISOFORMS 4 AND 5)</scope>
    <source>
        <strain>C57BL/6J</strain>
        <tissue>Lung</tissue>
    </source>
</reference>
<reference key="5">
    <citation type="journal article" date="2009" name="PLoS Biol.">
        <title>Lineage-specific biology revealed by a finished genome assembly of the mouse.</title>
        <authorList>
            <person name="Church D.M."/>
            <person name="Goodstadt L."/>
            <person name="Hillier L.W."/>
            <person name="Zody M.C."/>
            <person name="Goldstein S."/>
            <person name="She X."/>
            <person name="Bult C.J."/>
            <person name="Agarwala R."/>
            <person name="Cherry J.L."/>
            <person name="DiCuccio M."/>
            <person name="Hlavina W."/>
            <person name="Kapustin Y."/>
            <person name="Meric P."/>
            <person name="Maglott D."/>
            <person name="Birtle Z."/>
            <person name="Marques A.C."/>
            <person name="Graves T."/>
            <person name="Zhou S."/>
            <person name="Teague B."/>
            <person name="Potamousis K."/>
            <person name="Churas C."/>
            <person name="Place M."/>
            <person name="Herschleb J."/>
            <person name="Runnheim R."/>
            <person name="Forrest D."/>
            <person name="Amos-Landgraf J."/>
            <person name="Schwartz D.C."/>
            <person name="Cheng Z."/>
            <person name="Lindblad-Toh K."/>
            <person name="Eichler E.E."/>
            <person name="Ponting C.P."/>
        </authorList>
    </citation>
    <scope>NUCLEOTIDE SEQUENCE [LARGE SCALE GENOMIC DNA]</scope>
    <source>
        <strain>C57BL/6J</strain>
    </source>
</reference>
<reference key="6">
    <citation type="journal article" date="2004" name="Genome Res.">
        <title>The status, quality, and expansion of the NIH full-length cDNA project: the Mammalian Gene Collection (MGC).</title>
        <authorList>
            <consortium name="The MGC Project Team"/>
        </authorList>
    </citation>
    <scope>NUCLEOTIDE SEQUENCE [LARGE SCALE MRNA] (ISOFORM 5)</scope>
    <source>
        <strain>FVB/N</strain>
        <tissue>Mammary gland</tissue>
    </source>
</reference>
<reference key="7">
    <citation type="journal article" date="2000" name="J. Immunol.">
        <title>RGS molecule expression in murine B lymphocytes and ability to down-regulate chemotaxis to lymphoid chemokines.</title>
        <authorList>
            <person name="Reif K."/>
            <person name="Cyster J.G."/>
        </authorList>
    </citation>
    <scope>PARTIAL NUCLEOTIDE SEQUENCE (ISOFORMS 5 AND 6)</scope>
    <source>
        <strain>C57BL/6J</strain>
        <tissue>Embryo</tissue>
    </source>
</reference>
<reference key="8">
    <citation type="journal article" date="2002" name="J. Cell. Biochem.">
        <title>C2PA is a nuclear protein implicated in the heat shock response.</title>
        <authorList>
            <person name="Hirabayashi S."/>
            <person name="Ohno H."/>
            <person name="Iida J."/>
            <person name="Hata Y."/>
        </authorList>
    </citation>
    <scope>FUNCTION</scope>
    <scope>SUBCELLULAR LOCATION</scope>
</reference>
<reference key="9">
    <citation type="journal article" date="2010" name="Cell">
        <title>A tissue-specific atlas of mouse protein phosphorylation and expression.</title>
        <authorList>
            <person name="Huttlin E.L."/>
            <person name="Jedrychowski M.P."/>
            <person name="Elias J.E."/>
            <person name="Goswami T."/>
            <person name="Rad R."/>
            <person name="Beausoleil S.A."/>
            <person name="Villen J."/>
            <person name="Haas W."/>
            <person name="Sowa M.E."/>
            <person name="Gygi S.P."/>
        </authorList>
    </citation>
    <scope>PHOSPHORYLATION [LARGE SCALE ANALYSIS] AT SER-712; SER-715; SER-747 AND SER-776</scope>
    <scope>IDENTIFICATION BY MASS SPECTROMETRY [LARGE SCALE ANALYSIS]</scope>
    <source>
        <tissue>Brain</tissue>
        <tissue>Brown adipose tissue</tissue>
        <tissue>Heart</tissue>
        <tissue>Kidney</tissue>
        <tissue>Lung</tissue>
        <tissue>Spleen</tissue>
        <tissue>Testis</tissue>
    </source>
</reference>
<reference key="10">
    <citation type="submission" date="2004-11" db="PDB data bank">
        <title>Solution structure of the PDZ domain of RGS3.</title>
        <authorList>
            <consortium name="RIKEN structural genomics initiative (RSGI)"/>
        </authorList>
    </citation>
    <scope>STRUCTURE BY NMR OF 10-94</scope>
</reference>